<reference key="1">
    <citation type="submission" date="2007-10" db="EMBL/GenBank/DDBJ databases">
        <title>Brucella canis ATCC 23365 whole genome shotgun sequencing project.</title>
        <authorList>
            <person name="Setubal J.C."/>
            <person name="Bowns C."/>
            <person name="Boyle S."/>
            <person name="Crasta O.R."/>
            <person name="Czar M.J."/>
            <person name="Dharmanolla C."/>
            <person name="Gillespie J.J."/>
            <person name="Kenyon R.W."/>
            <person name="Lu J."/>
            <person name="Mane S."/>
            <person name="Mohapatra S."/>
            <person name="Nagrani S."/>
            <person name="Purkayastha A."/>
            <person name="Rajasimha H.K."/>
            <person name="Shallom J.M."/>
            <person name="Shallom S."/>
            <person name="Shukla M."/>
            <person name="Snyder E.E."/>
            <person name="Sobral B.W."/>
            <person name="Wattam A.R."/>
            <person name="Will R."/>
            <person name="Williams K."/>
            <person name="Yoo H."/>
            <person name="Bruce D."/>
            <person name="Detter C."/>
            <person name="Munk C."/>
            <person name="Brettin T.S."/>
        </authorList>
    </citation>
    <scope>NUCLEOTIDE SEQUENCE [LARGE SCALE GENOMIC DNA]</scope>
    <source>
        <strain>ATCC 23365 / NCTC 10854 / RM-666</strain>
    </source>
</reference>
<accession>A9MCW5</accession>
<feature type="chain" id="PRO_1000075123" description="Elongation factor 4">
    <location>
        <begin position="1"/>
        <end position="602"/>
    </location>
</feature>
<feature type="domain" description="tr-type G">
    <location>
        <begin position="6"/>
        <end position="188"/>
    </location>
</feature>
<feature type="binding site" evidence="1">
    <location>
        <begin position="18"/>
        <end position="23"/>
    </location>
    <ligand>
        <name>GTP</name>
        <dbReference type="ChEBI" id="CHEBI:37565"/>
    </ligand>
</feature>
<feature type="binding site" evidence="1">
    <location>
        <begin position="135"/>
        <end position="138"/>
    </location>
    <ligand>
        <name>GTP</name>
        <dbReference type="ChEBI" id="CHEBI:37565"/>
    </ligand>
</feature>
<name>LEPA_BRUC2</name>
<keyword id="KW-0997">Cell inner membrane</keyword>
<keyword id="KW-1003">Cell membrane</keyword>
<keyword id="KW-0342">GTP-binding</keyword>
<keyword id="KW-0378">Hydrolase</keyword>
<keyword id="KW-0472">Membrane</keyword>
<keyword id="KW-0547">Nucleotide-binding</keyword>
<keyword id="KW-0648">Protein biosynthesis</keyword>
<keyword id="KW-1185">Reference proteome</keyword>
<comment type="function">
    <text evidence="1">Required for accurate and efficient protein synthesis under certain stress conditions. May act as a fidelity factor of the translation reaction, by catalyzing a one-codon backward translocation of tRNAs on improperly translocated ribosomes. Back-translocation proceeds from a post-translocation (POST) complex to a pre-translocation (PRE) complex, thus giving elongation factor G a second chance to translocate the tRNAs correctly. Binds to ribosomes in a GTP-dependent manner.</text>
</comment>
<comment type="catalytic activity">
    <reaction evidence="1">
        <text>GTP + H2O = GDP + phosphate + H(+)</text>
        <dbReference type="Rhea" id="RHEA:19669"/>
        <dbReference type="ChEBI" id="CHEBI:15377"/>
        <dbReference type="ChEBI" id="CHEBI:15378"/>
        <dbReference type="ChEBI" id="CHEBI:37565"/>
        <dbReference type="ChEBI" id="CHEBI:43474"/>
        <dbReference type="ChEBI" id="CHEBI:58189"/>
        <dbReference type="EC" id="3.6.5.n1"/>
    </reaction>
</comment>
<comment type="subcellular location">
    <subcellularLocation>
        <location evidence="1">Cell inner membrane</location>
        <topology evidence="1">Peripheral membrane protein</topology>
        <orientation evidence="1">Cytoplasmic side</orientation>
    </subcellularLocation>
</comment>
<comment type="similarity">
    <text evidence="1">Belongs to the TRAFAC class translation factor GTPase superfamily. Classic translation factor GTPase family. LepA subfamily.</text>
</comment>
<sequence>MSTPLDHIRNFSIVAHIDHGKSTLADRLIQLTGGLDTREMKDQVLDSMDIERERGITIKAQTVRLSYKAKNGEDYVLNLIDTPGHVDFAYEVSRSLAACEGSLLVVDASQGVEAQTLANVYQAIDNNHEIVVVLNKIDLPAAEPERVKQQIEEVIGIDASDAVEISAKTGLGIEDVLEAIVNKLPAPKEGDRNAPLKAMLVDSWYDSYLGVIVLVRVIDGVLKKGQTIRMMGTGAKYPVERTGVFTPKMVQVDDLGPGELGFITASIKEVADTRVGDTITEDRRPTENMLSGFKPAQPVVFCGLFPVDAADFEDLRGAMGKLRLNDASFSFEMETSAALGFGFRCGFLGLLHLEIIQERLEREFNLDLITTAPSVVYRLNMTDGTHKELHNPADMPDVVKIASIEEPWIKATIMTPDDYLGAIMKLCQERRGIQIDLTYVGPRAMITYDLPLNEVVFDFYDRLKSISKGYASFDYNLSDYREGDLVKMSILVNEEPVDALSMLVHRSAAEKRGRALCEKLKELIPQHMFKIPIQAAIGGRIVARETISALRKDVTAKCYGGDVTRKRKLLEKQKEGKKRMRQFGKVEIPQEAFIQALKMGDD</sequence>
<organism>
    <name type="scientific">Brucella canis (strain ATCC 23365 / NCTC 10854 / RM-666)</name>
    <dbReference type="NCBI Taxonomy" id="483179"/>
    <lineage>
        <taxon>Bacteria</taxon>
        <taxon>Pseudomonadati</taxon>
        <taxon>Pseudomonadota</taxon>
        <taxon>Alphaproteobacteria</taxon>
        <taxon>Hyphomicrobiales</taxon>
        <taxon>Brucellaceae</taxon>
        <taxon>Brucella/Ochrobactrum group</taxon>
        <taxon>Brucella</taxon>
    </lineage>
</organism>
<proteinExistence type="inferred from homology"/>
<evidence type="ECO:0000255" key="1">
    <source>
        <dbReference type="HAMAP-Rule" id="MF_00071"/>
    </source>
</evidence>
<gene>
    <name evidence="1" type="primary">lepA</name>
    <name type="ordered locus">BCAN_B1060</name>
</gene>
<protein>
    <recommendedName>
        <fullName evidence="1">Elongation factor 4</fullName>
        <shortName evidence="1">EF-4</shortName>
        <ecNumber evidence="1">3.6.5.n1</ecNumber>
    </recommendedName>
    <alternativeName>
        <fullName evidence="1">Ribosomal back-translocase LepA</fullName>
    </alternativeName>
</protein>
<dbReference type="EC" id="3.6.5.n1" evidence="1"/>
<dbReference type="EMBL" id="CP000873">
    <property type="protein sequence ID" value="ABX64202.1"/>
    <property type="molecule type" value="Genomic_DNA"/>
</dbReference>
<dbReference type="RefSeq" id="WP_004687034.1">
    <property type="nucleotide sequence ID" value="NC_010104.1"/>
</dbReference>
<dbReference type="SMR" id="A9MCW5"/>
<dbReference type="GeneID" id="97534913"/>
<dbReference type="KEGG" id="bcs:BCAN_B1060"/>
<dbReference type="HOGENOM" id="CLU_009995_3_3_5"/>
<dbReference type="PhylomeDB" id="A9MCW5"/>
<dbReference type="Proteomes" id="UP000001385">
    <property type="component" value="Chromosome II"/>
</dbReference>
<dbReference type="GO" id="GO:0005886">
    <property type="term" value="C:plasma membrane"/>
    <property type="evidence" value="ECO:0007669"/>
    <property type="project" value="UniProtKB-SubCell"/>
</dbReference>
<dbReference type="GO" id="GO:0005525">
    <property type="term" value="F:GTP binding"/>
    <property type="evidence" value="ECO:0007669"/>
    <property type="project" value="UniProtKB-UniRule"/>
</dbReference>
<dbReference type="GO" id="GO:0003924">
    <property type="term" value="F:GTPase activity"/>
    <property type="evidence" value="ECO:0007669"/>
    <property type="project" value="UniProtKB-UniRule"/>
</dbReference>
<dbReference type="GO" id="GO:0097216">
    <property type="term" value="F:guanosine tetraphosphate binding"/>
    <property type="evidence" value="ECO:0007669"/>
    <property type="project" value="UniProtKB-ARBA"/>
</dbReference>
<dbReference type="GO" id="GO:0043022">
    <property type="term" value="F:ribosome binding"/>
    <property type="evidence" value="ECO:0007669"/>
    <property type="project" value="UniProtKB-UniRule"/>
</dbReference>
<dbReference type="GO" id="GO:0003746">
    <property type="term" value="F:translation elongation factor activity"/>
    <property type="evidence" value="ECO:0007669"/>
    <property type="project" value="UniProtKB-UniRule"/>
</dbReference>
<dbReference type="GO" id="GO:0045727">
    <property type="term" value="P:positive regulation of translation"/>
    <property type="evidence" value="ECO:0007669"/>
    <property type="project" value="UniProtKB-UniRule"/>
</dbReference>
<dbReference type="CDD" id="cd03699">
    <property type="entry name" value="EF4_II"/>
    <property type="match status" value="1"/>
</dbReference>
<dbReference type="CDD" id="cd16260">
    <property type="entry name" value="EF4_III"/>
    <property type="match status" value="1"/>
</dbReference>
<dbReference type="CDD" id="cd01890">
    <property type="entry name" value="LepA"/>
    <property type="match status" value="1"/>
</dbReference>
<dbReference type="CDD" id="cd03709">
    <property type="entry name" value="lepA_C"/>
    <property type="match status" value="1"/>
</dbReference>
<dbReference type="FunFam" id="3.40.50.300:FF:000078">
    <property type="entry name" value="Elongation factor 4"/>
    <property type="match status" value="1"/>
</dbReference>
<dbReference type="FunFam" id="2.40.30.10:FF:000015">
    <property type="entry name" value="Translation factor GUF1, mitochondrial"/>
    <property type="match status" value="1"/>
</dbReference>
<dbReference type="FunFam" id="3.30.70.240:FF:000007">
    <property type="entry name" value="Translation factor GUF1, mitochondrial"/>
    <property type="match status" value="1"/>
</dbReference>
<dbReference type="FunFam" id="3.30.70.2570:FF:000001">
    <property type="entry name" value="Translation factor GUF1, mitochondrial"/>
    <property type="match status" value="1"/>
</dbReference>
<dbReference type="FunFam" id="3.30.70.870:FF:000004">
    <property type="entry name" value="Translation factor GUF1, mitochondrial"/>
    <property type="match status" value="1"/>
</dbReference>
<dbReference type="Gene3D" id="3.30.70.240">
    <property type="match status" value="1"/>
</dbReference>
<dbReference type="Gene3D" id="3.30.70.2570">
    <property type="entry name" value="Elongation factor 4, C-terminal domain"/>
    <property type="match status" value="1"/>
</dbReference>
<dbReference type="Gene3D" id="3.30.70.870">
    <property type="entry name" value="Elongation Factor G (Translational Gtpase), domain 3"/>
    <property type="match status" value="1"/>
</dbReference>
<dbReference type="Gene3D" id="3.40.50.300">
    <property type="entry name" value="P-loop containing nucleotide triphosphate hydrolases"/>
    <property type="match status" value="1"/>
</dbReference>
<dbReference type="Gene3D" id="2.40.30.10">
    <property type="entry name" value="Translation factors"/>
    <property type="match status" value="1"/>
</dbReference>
<dbReference type="HAMAP" id="MF_00071">
    <property type="entry name" value="LepA"/>
    <property type="match status" value="1"/>
</dbReference>
<dbReference type="InterPro" id="IPR006297">
    <property type="entry name" value="EF-4"/>
</dbReference>
<dbReference type="InterPro" id="IPR035647">
    <property type="entry name" value="EFG_III/V"/>
</dbReference>
<dbReference type="InterPro" id="IPR000640">
    <property type="entry name" value="EFG_V-like"/>
</dbReference>
<dbReference type="InterPro" id="IPR004161">
    <property type="entry name" value="EFTu-like_2"/>
</dbReference>
<dbReference type="InterPro" id="IPR031157">
    <property type="entry name" value="G_TR_CS"/>
</dbReference>
<dbReference type="InterPro" id="IPR038363">
    <property type="entry name" value="LepA_C_sf"/>
</dbReference>
<dbReference type="InterPro" id="IPR013842">
    <property type="entry name" value="LepA_CTD"/>
</dbReference>
<dbReference type="InterPro" id="IPR035654">
    <property type="entry name" value="LepA_IV"/>
</dbReference>
<dbReference type="InterPro" id="IPR027417">
    <property type="entry name" value="P-loop_NTPase"/>
</dbReference>
<dbReference type="InterPro" id="IPR005225">
    <property type="entry name" value="Small_GTP-bd"/>
</dbReference>
<dbReference type="InterPro" id="IPR000795">
    <property type="entry name" value="T_Tr_GTP-bd_dom"/>
</dbReference>
<dbReference type="NCBIfam" id="TIGR01393">
    <property type="entry name" value="lepA"/>
    <property type="match status" value="1"/>
</dbReference>
<dbReference type="NCBIfam" id="TIGR00231">
    <property type="entry name" value="small_GTP"/>
    <property type="match status" value="1"/>
</dbReference>
<dbReference type="PANTHER" id="PTHR43512:SF4">
    <property type="entry name" value="TRANSLATION FACTOR GUF1 HOMOLOG, CHLOROPLASTIC"/>
    <property type="match status" value="1"/>
</dbReference>
<dbReference type="PANTHER" id="PTHR43512">
    <property type="entry name" value="TRANSLATION FACTOR GUF1-RELATED"/>
    <property type="match status" value="1"/>
</dbReference>
<dbReference type="Pfam" id="PF00679">
    <property type="entry name" value="EFG_C"/>
    <property type="match status" value="1"/>
</dbReference>
<dbReference type="Pfam" id="PF00009">
    <property type="entry name" value="GTP_EFTU"/>
    <property type="match status" value="1"/>
</dbReference>
<dbReference type="Pfam" id="PF03144">
    <property type="entry name" value="GTP_EFTU_D2"/>
    <property type="match status" value="1"/>
</dbReference>
<dbReference type="Pfam" id="PF06421">
    <property type="entry name" value="LepA_C"/>
    <property type="match status" value="1"/>
</dbReference>
<dbReference type="PRINTS" id="PR00315">
    <property type="entry name" value="ELONGATNFCT"/>
</dbReference>
<dbReference type="SMART" id="SM00838">
    <property type="entry name" value="EFG_C"/>
    <property type="match status" value="1"/>
</dbReference>
<dbReference type="SUPFAM" id="SSF54980">
    <property type="entry name" value="EF-G C-terminal domain-like"/>
    <property type="match status" value="2"/>
</dbReference>
<dbReference type="SUPFAM" id="SSF52540">
    <property type="entry name" value="P-loop containing nucleoside triphosphate hydrolases"/>
    <property type="match status" value="1"/>
</dbReference>
<dbReference type="PROSITE" id="PS00301">
    <property type="entry name" value="G_TR_1"/>
    <property type="match status" value="1"/>
</dbReference>
<dbReference type="PROSITE" id="PS51722">
    <property type="entry name" value="G_TR_2"/>
    <property type="match status" value="1"/>
</dbReference>